<protein>
    <recommendedName>
        <fullName evidence="1">Lipoprotein signal peptidase</fullName>
        <ecNumber evidence="1">3.4.23.36</ecNumber>
    </recommendedName>
    <alternativeName>
        <fullName evidence="1">Prolipoprotein signal peptidase</fullName>
    </alternativeName>
    <alternativeName>
        <fullName evidence="1">Signal peptidase II</fullName>
        <shortName evidence="1">SPase II</shortName>
    </alternativeName>
</protein>
<gene>
    <name evidence="1" type="primary">lspA</name>
    <name type="ordered locus">Sbal223_3234</name>
</gene>
<reference key="1">
    <citation type="submission" date="2008-12" db="EMBL/GenBank/DDBJ databases">
        <title>Complete sequence of chromosome of Shewanella baltica OS223.</title>
        <authorList>
            <consortium name="US DOE Joint Genome Institute"/>
            <person name="Lucas S."/>
            <person name="Copeland A."/>
            <person name="Lapidus A."/>
            <person name="Glavina del Rio T."/>
            <person name="Dalin E."/>
            <person name="Tice H."/>
            <person name="Bruce D."/>
            <person name="Goodwin L."/>
            <person name="Pitluck S."/>
            <person name="Chertkov O."/>
            <person name="Meincke L."/>
            <person name="Brettin T."/>
            <person name="Detter J.C."/>
            <person name="Han C."/>
            <person name="Kuske C.R."/>
            <person name="Larimer F."/>
            <person name="Land M."/>
            <person name="Hauser L."/>
            <person name="Kyrpides N."/>
            <person name="Ovchinnikova G."/>
            <person name="Brettar I."/>
            <person name="Rodrigues J."/>
            <person name="Konstantinidis K."/>
            <person name="Tiedje J."/>
        </authorList>
    </citation>
    <scope>NUCLEOTIDE SEQUENCE [LARGE SCALE GENOMIC DNA]</scope>
    <source>
        <strain>OS223</strain>
    </source>
</reference>
<organism>
    <name type="scientific">Shewanella baltica (strain OS223)</name>
    <dbReference type="NCBI Taxonomy" id="407976"/>
    <lineage>
        <taxon>Bacteria</taxon>
        <taxon>Pseudomonadati</taxon>
        <taxon>Pseudomonadota</taxon>
        <taxon>Gammaproteobacteria</taxon>
        <taxon>Alteromonadales</taxon>
        <taxon>Shewanellaceae</taxon>
        <taxon>Shewanella</taxon>
    </lineage>
</organism>
<dbReference type="EC" id="3.4.23.36" evidence="1"/>
<dbReference type="EMBL" id="CP001252">
    <property type="protein sequence ID" value="ACK47718.1"/>
    <property type="molecule type" value="Genomic_DNA"/>
</dbReference>
<dbReference type="RefSeq" id="WP_011846081.1">
    <property type="nucleotide sequence ID" value="NC_011663.1"/>
</dbReference>
<dbReference type="SMR" id="B8EFC6"/>
<dbReference type="MEROPS" id="A08.001"/>
<dbReference type="KEGG" id="sbp:Sbal223_3234"/>
<dbReference type="HOGENOM" id="CLU_083252_4_0_6"/>
<dbReference type="UniPathway" id="UPA00665"/>
<dbReference type="Proteomes" id="UP000002507">
    <property type="component" value="Chromosome"/>
</dbReference>
<dbReference type="GO" id="GO:0005886">
    <property type="term" value="C:plasma membrane"/>
    <property type="evidence" value="ECO:0007669"/>
    <property type="project" value="UniProtKB-SubCell"/>
</dbReference>
<dbReference type="GO" id="GO:0004190">
    <property type="term" value="F:aspartic-type endopeptidase activity"/>
    <property type="evidence" value="ECO:0007669"/>
    <property type="project" value="UniProtKB-UniRule"/>
</dbReference>
<dbReference type="GO" id="GO:0006508">
    <property type="term" value="P:proteolysis"/>
    <property type="evidence" value="ECO:0007669"/>
    <property type="project" value="UniProtKB-KW"/>
</dbReference>
<dbReference type="HAMAP" id="MF_00161">
    <property type="entry name" value="LspA"/>
    <property type="match status" value="1"/>
</dbReference>
<dbReference type="InterPro" id="IPR001872">
    <property type="entry name" value="Peptidase_A8"/>
</dbReference>
<dbReference type="NCBIfam" id="TIGR00077">
    <property type="entry name" value="lspA"/>
    <property type="match status" value="1"/>
</dbReference>
<dbReference type="PANTHER" id="PTHR33695">
    <property type="entry name" value="LIPOPROTEIN SIGNAL PEPTIDASE"/>
    <property type="match status" value="1"/>
</dbReference>
<dbReference type="PANTHER" id="PTHR33695:SF1">
    <property type="entry name" value="LIPOPROTEIN SIGNAL PEPTIDASE"/>
    <property type="match status" value="1"/>
</dbReference>
<dbReference type="Pfam" id="PF01252">
    <property type="entry name" value="Peptidase_A8"/>
    <property type="match status" value="1"/>
</dbReference>
<dbReference type="PRINTS" id="PR00781">
    <property type="entry name" value="LIPOSIGPTASE"/>
</dbReference>
<dbReference type="PROSITE" id="PS00855">
    <property type="entry name" value="SPASE_II"/>
    <property type="match status" value="1"/>
</dbReference>
<accession>B8EFC6</accession>
<name>LSPA_SHEB2</name>
<feature type="chain" id="PRO_1000123505" description="Lipoprotein signal peptidase">
    <location>
        <begin position="1"/>
        <end position="171"/>
    </location>
</feature>
<feature type="transmembrane region" description="Helical" evidence="1">
    <location>
        <begin position="12"/>
        <end position="32"/>
    </location>
</feature>
<feature type="transmembrane region" description="Helical" evidence="1">
    <location>
        <begin position="67"/>
        <end position="87"/>
    </location>
</feature>
<feature type="transmembrane region" description="Helical" evidence="1">
    <location>
        <begin position="93"/>
        <end position="113"/>
    </location>
</feature>
<feature type="transmembrane region" description="Helical" evidence="1">
    <location>
        <begin position="137"/>
        <end position="157"/>
    </location>
</feature>
<feature type="active site" evidence="1">
    <location>
        <position position="123"/>
    </location>
</feature>
<feature type="active site" evidence="1">
    <location>
        <position position="141"/>
    </location>
</feature>
<keyword id="KW-0064">Aspartyl protease</keyword>
<keyword id="KW-0997">Cell inner membrane</keyword>
<keyword id="KW-1003">Cell membrane</keyword>
<keyword id="KW-0378">Hydrolase</keyword>
<keyword id="KW-0472">Membrane</keyword>
<keyword id="KW-0645">Protease</keyword>
<keyword id="KW-0812">Transmembrane</keyword>
<keyword id="KW-1133">Transmembrane helix</keyword>
<comment type="function">
    <text evidence="1">This protein specifically catalyzes the removal of signal peptides from prolipoproteins.</text>
</comment>
<comment type="catalytic activity">
    <reaction evidence="1">
        <text>Release of signal peptides from bacterial membrane prolipoproteins. Hydrolyzes -Xaa-Yaa-Zaa-|-(S,diacylglyceryl)Cys-, in which Xaa is hydrophobic (preferably Leu), and Yaa (Ala or Ser) and Zaa (Gly or Ala) have small, neutral side chains.</text>
        <dbReference type="EC" id="3.4.23.36"/>
    </reaction>
</comment>
<comment type="pathway">
    <text evidence="1">Protein modification; lipoprotein biosynthesis (signal peptide cleavage).</text>
</comment>
<comment type="subcellular location">
    <subcellularLocation>
        <location evidence="1">Cell inner membrane</location>
        <topology evidence="1">Multi-pass membrane protein</topology>
    </subcellularLocation>
</comment>
<comment type="similarity">
    <text evidence="1">Belongs to the peptidase A8 family.</text>
</comment>
<evidence type="ECO:0000255" key="1">
    <source>
        <dbReference type="HAMAP-Rule" id="MF_00161"/>
    </source>
</evidence>
<sequence>MPLTWKDSGLRWYWVAVLVFFADQLSKQWVLANFDLHESLNLLPFFNFTYVRNYGAAFSFLSDAGGWQRWLFTIVAVGFSTLLTVWLRRQSASLLKLNLAYTLVIGGALGNLVDRLMHGFVVDFIDFFWAKSHYPAFNIADSAICIGAVLIIWDAFLSGKSETDSAEGVKK</sequence>
<proteinExistence type="inferred from homology"/>